<evidence type="ECO:0000255" key="1">
    <source>
        <dbReference type="HAMAP-Rule" id="MF_01309"/>
    </source>
</evidence>
<evidence type="ECO:0000305" key="2"/>
<dbReference type="EMBL" id="CP000356">
    <property type="protein sequence ID" value="ABF54517.1"/>
    <property type="molecule type" value="Genomic_DNA"/>
</dbReference>
<dbReference type="RefSeq" id="WP_011543082.1">
    <property type="nucleotide sequence ID" value="NC_008048.1"/>
</dbReference>
<dbReference type="SMR" id="Q1GPA5"/>
<dbReference type="STRING" id="317655.Sala_2812"/>
<dbReference type="KEGG" id="sal:Sala_2812"/>
<dbReference type="eggNOG" id="COG0092">
    <property type="taxonomic scope" value="Bacteria"/>
</dbReference>
<dbReference type="HOGENOM" id="CLU_058591_0_2_5"/>
<dbReference type="OrthoDB" id="9806396at2"/>
<dbReference type="Proteomes" id="UP000006578">
    <property type="component" value="Chromosome"/>
</dbReference>
<dbReference type="GO" id="GO:0022627">
    <property type="term" value="C:cytosolic small ribosomal subunit"/>
    <property type="evidence" value="ECO:0007669"/>
    <property type="project" value="TreeGrafter"/>
</dbReference>
<dbReference type="GO" id="GO:0003729">
    <property type="term" value="F:mRNA binding"/>
    <property type="evidence" value="ECO:0007669"/>
    <property type="project" value="UniProtKB-UniRule"/>
</dbReference>
<dbReference type="GO" id="GO:0019843">
    <property type="term" value="F:rRNA binding"/>
    <property type="evidence" value="ECO:0007669"/>
    <property type="project" value="UniProtKB-UniRule"/>
</dbReference>
<dbReference type="GO" id="GO:0003735">
    <property type="term" value="F:structural constituent of ribosome"/>
    <property type="evidence" value="ECO:0007669"/>
    <property type="project" value="InterPro"/>
</dbReference>
<dbReference type="GO" id="GO:0006412">
    <property type="term" value="P:translation"/>
    <property type="evidence" value="ECO:0007669"/>
    <property type="project" value="UniProtKB-UniRule"/>
</dbReference>
<dbReference type="CDD" id="cd02412">
    <property type="entry name" value="KH-II_30S_S3"/>
    <property type="match status" value="1"/>
</dbReference>
<dbReference type="FunFam" id="3.30.1140.32:FF:000002">
    <property type="entry name" value="30S ribosomal protein S3"/>
    <property type="match status" value="1"/>
</dbReference>
<dbReference type="FunFam" id="3.30.300.20:FF:000001">
    <property type="entry name" value="30S ribosomal protein S3"/>
    <property type="match status" value="1"/>
</dbReference>
<dbReference type="Gene3D" id="3.30.300.20">
    <property type="match status" value="1"/>
</dbReference>
<dbReference type="Gene3D" id="3.30.1140.32">
    <property type="entry name" value="Ribosomal protein S3, C-terminal domain"/>
    <property type="match status" value="1"/>
</dbReference>
<dbReference type="HAMAP" id="MF_01309_B">
    <property type="entry name" value="Ribosomal_uS3_B"/>
    <property type="match status" value="1"/>
</dbReference>
<dbReference type="InterPro" id="IPR004087">
    <property type="entry name" value="KH_dom"/>
</dbReference>
<dbReference type="InterPro" id="IPR015946">
    <property type="entry name" value="KH_dom-like_a/b"/>
</dbReference>
<dbReference type="InterPro" id="IPR004044">
    <property type="entry name" value="KH_dom_type_2"/>
</dbReference>
<dbReference type="InterPro" id="IPR009019">
    <property type="entry name" value="KH_sf_prok-type"/>
</dbReference>
<dbReference type="InterPro" id="IPR036419">
    <property type="entry name" value="Ribosomal_S3_C_sf"/>
</dbReference>
<dbReference type="InterPro" id="IPR005704">
    <property type="entry name" value="Ribosomal_uS3_bac-typ"/>
</dbReference>
<dbReference type="InterPro" id="IPR001351">
    <property type="entry name" value="Ribosomal_uS3_C"/>
</dbReference>
<dbReference type="InterPro" id="IPR018280">
    <property type="entry name" value="Ribosomal_uS3_CS"/>
</dbReference>
<dbReference type="NCBIfam" id="TIGR01009">
    <property type="entry name" value="rpsC_bact"/>
    <property type="match status" value="1"/>
</dbReference>
<dbReference type="PANTHER" id="PTHR11760">
    <property type="entry name" value="30S/40S RIBOSOMAL PROTEIN S3"/>
    <property type="match status" value="1"/>
</dbReference>
<dbReference type="PANTHER" id="PTHR11760:SF19">
    <property type="entry name" value="SMALL RIBOSOMAL SUBUNIT PROTEIN US3C"/>
    <property type="match status" value="1"/>
</dbReference>
<dbReference type="Pfam" id="PF07650">
    <property type="entry name" value="KH_2"/>
    <property type="match status" value="1"/>
</dbReference>
<dbReference type="Pfam" id="PF00189">
    <property type="entry name" value="Ribosomal_S3_C"/>
    <property type="match status" value="1"/>
</dbReference>
<dbReference type="SMART" id="SM00322">
    <property type="entry name" value="KH"/>
    <property type="match status" value="1"/>
</dbReference>
<dbReference type="SUPFAM" id="SSF54814">
    <property type="entry name" value="Prokaryotic type KH domain (KH-domain type II)"/>
    <property type="match status" value="1"/>
</dbReference>
<dbReference type="SUPFAM" id="SSF54821">
    <property type="entry name" value="Ribosomal protein S3 C-terminal domain"/>
    <property type="match status" value="1"/>
</dbReference>
<dbReference type="PROSITE" id="PS50823">
    <property type="entry name" value="KH_TYPE_2"/>
    <property type="match status" value="1"/>
</dbReference>
<dbReference type="PROSITE" id="PS00548">
    <property type="entry name" value="RIBOSOMAL_S3"/>
    <property type="match status" value="1"/>
</dbReference>
<reference key="1">
    <citation type="journal article" date="2009" name="Proc. Natl. Acad. Sci. U.S.A.">
        <title>The genomic basis of trophic strategy in marine bacteria.</title>
        <authorList>
            <person name="Lauro F.M."/>
            <person name="McDougald D."/>
            <person name="Thomas T."/>
            <person name="Williams T.J."/>
            <person name="Egan S."/>
            <person name="Rice S."/>
            <person name="DeMaere M.Z."/>
            <person name="Ting L."/>
            <person name="Ertan H."/>
            <person name="Johnson J."/>
            <person name="Ferriera S."/>
            <person name="Lapidus A."/>
            <person name="Anderson I."/>
            <person name="Kyrpides N."/>
            <person name="Munk A.C."/>
            <person name="Detter C."/>
            <person name="Han C.S."/>
            <person name="Brown M.V."/>
            <person name="Robb F.T."/>
            <person name="Kjelleberg S."/>
            <person name="Cavicchioli R."/>
        </authorList>
    </citation>
    <scope>NUCLEOTIDE SEQUENCE [LARGE SCALE GENOMIC DNA]</scope>
    <source>
        <strain>DSM 13593 / LMG 18877 / RB2256</strain>
    </source>
</reference>
<gene>
    <name evidence="1" type="primary">rpsC</name>
    <name type="ordered locus">Sala_2812</name>
</gene>
<organism>
    <name type="scientific">Sphingopyxis alaskensis (strain DSM 13593 / LMG 18877 / RB2256)</name>
    <name type="common">Sphingomonas alaskensis</name>
    <dbReference type="NCBI Taxonomy" id="317655"/>
    <lineage>
        <taxon>Bacteria</taxon>
        <taxon>Pseudomonadati</taxon>
        <taxon>Pseudomonadota</taxon>
        <taxon>Alphaproteobacteria</taxon>
        <taxon>Sphingomonadales</taxon>
        <taxon>Sphingomonadaceae</taxon>
        <taxon>Sphingopyxis</taxon>
    </lineage>
</organism>
<protein>
    <recommendedName>
        <fullName evidence="1">Small ribosomal subunit protein uS3</fullName>
    </recommendedName>
    <alternativeName>
        <fullName evidence="2">30S ribosomal protein S3</fullName>
    </alternativeName>
</protein>
<keyword id="KW-1185">Reference proteome</keyword>
<keyword id="KW-0687">Ribonucleoprotein</keyword>
<keyword id="KW-0689">Ribosomal protein</keyword>
<keyword id="KW-0694">RNA-binding</keyword>
<keyword id="KW-0699">rRNA-binding</keyword>
<proteinExistence type="inferred from homology"/>
<sequence>MGQKSNPIGLRLQVNRTWDSRWFAEGEDYGRMLVEDLKIRQYVFKALPQAAISKVVIERPAKLCRVSIYAARPGVIIGKKGADIEKLRKKLGEMTGSDVSLNIVEIRKPEVDAKLVAQGIADQLERRVAFRRAMKRAVQSAMRLGAEGIRINCAGRLGGAEIARTEWYREGRVPLHTLRANVDYAEAEAHTAYGVCGIKVWIFKGEILGHDPMATDRLMLDAQTTGVRPAREDRR</sequence>
<comment type="function">
    <text evidence="1">Binds the lower part of the 30S subunit head. Binds mRNA in the 70S ribosome, positioning it for translation.</text>
</comment>
<comment type="subunit">
    <text evidence="1">Part of the 30S ribosomal subunit. Forms a tight complex with proteins S10 and S14.</text>
</comment>
<comment type="similarity">
    <text evidence="1">Belongs to the universal ribosomal protein uS3 family.</text>
</comment>
<name>RS3_SPHAL</name>
<accession>Q1GPA5</accession>
<feature type="chain" id="PRO_0000293890" description="Small ribosomal subunit protein uS3">
    <location>
        <begin position="1"/>
        <end position="235"/>
    </location>
</feature>
<feature type="domain" description="KH type-2" evidence="1">
    <location>
        <begin position="39"/>
        <end position="107"/>
    </location>
</feature>